<reference key="1">
    <citation type="journal article" date="2009" name="PLoS Genet.">
        <title>Adaptations to submarine hydrothermal environments exemplified by the genome of Nautilia profundicola.</title>
        <authorList>
            <person name="Campbell B.J."/>
            <person name="Smith J.L."/>
            <person name="Hanson T.E."/>
            <person name="Klotz M.G."/>
            <person name="Stein L.Y."/>
            <person name="Lee C.K."/>
            <person name="Wu D."/>
            <person name="Robinson J.M."/>
            <person name="Khouri H.M."/>
            <person name="Eisen J.A."/>
            <person name="Cary S.C."/>
        </authorList>
    </citation>
    <scope>NUCLEOTIDE SEQUENCE [LARGE SCALE GENOMIC DNA]</scope>
    <source>
        <strain>ATCC BAA-1463 / DSM 18972 / AmH</strain>
    </source>
</reference>
<comment type="function">
    <text evidence="1">Fluoride-specific ion channel. Important for reducing fluoride concentration in the cell, thus reducing its toxicity.</text>
</comment>
<comment type="catalytic activity">
    <reaction evidence="1">
        <text>fluoride(in) = fluoride(out)</text>
        <dbReference type="Rhea" id="RHEA:76159"/>
        <dbReference type="ChEBI" id="CHEBI:17051"/>
    </reaction>
    <physiologicalReaction direction="left-to-right" evidence="1">
        <dbReference type="Rhea" id="RHEA:76160"/>
    </physiologicalReaction>
</comment>
<comment type="activity regulation">
    <text evidence="1">Na(+) is not transported, but it plays an essential structural role and its presence is essential for fluoride channel function.</text>
</comment>
<comment type="subcellular location">
    <subcellularLocation>
        <location evidence="1">Cell inner membrane</location>
        <topology evidence="1">Multi-pass membrane protein</topology>
    </subcellularLocation>
</comment>
<comment type="similarity">
    <text evidence="1">Belongs to the fluoride channel Fluc/FEX (TC 1.A.43) family.</text>
</comment>
<proteinExistence type="inferred from homology"/>
<evidence type="ECO:0000255" key="1">
    <source>
        <dbReference type="HAMAP-Rule" id="MF_00454"/>
    </source>
</evidence>
<feature type="chain" id="PRO_1000135325" description="Fluoride-specific ion channel FluC">
    <location>
        <begin position="1"/>
        <end position="128"/>
    </location>
</feature>
<feature type="transmembrane region" description="Helical" evidence="1">
    <location>
        <begin position="7"/>
        <end position="27"/>
    </location>
</feature>
<feature type="transmembrane region" description="Helical" evidence="1">
    <location>
        <begin position="37"/>
        <end position="57"/>
    </location>
</feature>
<feature type="transmembrane region" description="Helical" evidence="1">
    <location>
        <begin position="73"/>
        <end position="93"/>
    </location>
</feature>
<feature type="transmembrane region" description="Helical" evidence="1">
    <location>
        <begin position="96"/>
        <end position="116"/>
    </location>
</feature>
<feature type="binding site" evidence="1">
    <location>
        <position position="77"/>
    </location>
    <ligand>
        <name>Na(+)</name>
        <dbReference type="ChEBI" id="CHEBI:29101"/>
        <note>structural</note>
    </ligand>
</feature>
<feature type="binding site" evidence="1">
    <location>
        <position position="80"/>
    </location>
    <ligand>
        <name>Na(+)</name>
        <dbReference type="ChEBI" id="CHEBI:29101"/>
        <note>structural</note>
    </ligand>
</feature>
<protein>
    <recommendedName>
        <fullName evidence="1">Fluoride-specific ion channel FluC</fullName>
    </recommendedName>
</protein>
<gene>
    <name evidence="1" type="primary">fluC</name>
    <name evidence="1" type="synonym">crcB</name>
    <name type="ordered locus">NAMH_0645</name>
</gene>
<accession>B9L8U9</accession>
<name>FLUC_NAUPA</name>
<sequence>MKFDTMLAIGIGGFIGAILRAYTAGLVNSAVKHDIPFGTLSVNLIGSLLLGMFIGAIQYGGIQNPYIKSMLTTGMMGAFTTFSTFAVESFFLFKNALYIQALSYILLNVIGCIILAGAGFKGIEAILK</sequence>
<organism>
    <name type="scientific">Nautilia profundicola (strain ATCC BAA-1463 / DSM 18972 / AmH)</name>
    <dbReference type="NCBI Taxonomy" id="598659"/>
    <lineage>
        <taxon>Bacteria</taxon>
        <taxon>Pseudomonadati</taxon>
        <taxon>Campylobacterota</taxon>
        <taxon>Epsilonproteobacteria</taxon>
        <taxon>Nautiliales</taxon>
        <taxon>Nautiliaceae</taxon>
        <taxon>Nautilia</taxon>
    </lineage>
</organism>
<keyword id="KW-0997">Cell inner membrane</keyword>
<keyword id="KW-1003">Cell membrane</keyword>
<keyword id="KW-0407">Ion channel</keyword>
<keyword id="KW-0406">Ion transport</keyword>
<keyword id="KW-0472">Membrane</keyword>
<keyword id="KW-0479">Metal-binding</keyword>
<keyword id="KW-0915">Sodium</keyword>
<keyword id="KW-0812">Transmembrane</keyword>
<keyword id="KW-1133">Transmembrane helix</keyword>
<keyword id="KW-0813">Transport</keyword>
<dbReference type="EMBL" id="CP001279">
    <property type="protein sequence ID" value="ACM93000.1"/>
    <property type="molecule type" value="Genomic_DNA"/>
</dbReference>
<dbReference type="RefSeq" id="WP_015902052.1">
    <property type="nucleotide sequence ID" value="NC_012115.1"/>
</dbReference>
<dbReference type="SMR" id="B9L8U9"/>
<dbReference type="STRING" id="598659.NAMH_0645"/>
<dbReference type="KEGG" id="nam:NAMH_0645"/>
<dbReference type="eggNOG" id="COG0239">
    <property type="taxonomic scope" value="Bacteria"/>
</dbReference>
<dbReference type="HOGENOM" id="CLU_114342_3_0_7"/>
<dbReference type="OrthoDB" id="9806299at2"/>
<dbReference type="Proteomes" id="UP000000448">
    <property type="component" value="Chromosome"/>
</dbReference>
<dbReference type="GO" id="GO:0005886">
    <property type="term" value="C:plasma membrane"/>
    <property type="evidence" value="ECO:0007669"/>
    <property type="project" value="UniProtKB-SubCell"/>
</dbReference>
<dbReference type="GO" id="GO:0062054">
    <property type="term" value="F:fluoride channel activity"/>
    <property type="evidence" value="ECO:0007669"/>
    <property type="project" value="UniProtKB-UniRule"/>
</dbReference>
<dbReference type="GO" id="GO:0046872">
    <property type="term" value="F:metal ion binding"/>
    <property type="evidence" value="ECO:0007669"/>
    <property type="project" value="UniProtKB-KW"/>
</dbReference>
<dbReference type="GO" id="GO:0140114">
    <property type="term" value="P:cellular detoxification of fluoride"/>
    <property type="evidence" value="ECO:0007669"/>
    <property type="project" value="UniProtKB-UniRule"/>
</dbReference>
<dbReference type="HAMAP" id="MF_00454">
    <property type="entry name" value="FluC"/>
    <property type="match status" value="1"/>
</dbReference>
<dbReference type="InterPro" id="IPR003691">
    <property type="entry name" value="FluC"/>
</dbReference>
<dbReference type="NCBIfam" id="TIGR00494">
    <property type="entry name" value="crcB"/>
    <property type="match status" value="1"/>
</dbReference>
<dbReference type="PANTHER" id="PTHR28259">
    <property type="entry name" value="FLUORIDE EXPORT PROTEIN 1-RELATED"/>
    <property type="match status" value="1"/>
</dbReference>
<dbReference type="PANTHER" id="PTHR28259:SF1">
    <property type="entry name" value="FLUORIDE EXPORT PROTEIN 1-RELATED"/>
    <property type="match status" value="1"/>
</dbReference>
<dbReference type="Pfam" id="PF02537">
    <property type="entry name" value="CRCB"/>
    <property type="match status" value="1"/>
</dbReference>